<comment type="function">
    <text evidence="1">Non-essential, abundant cell division factor that is required for proper Z-ring formation. It is recruited early to the divisome by direct interaction with FtsZ, stimulating Z-ring assembly and thereby promoting cell division earlier in the cell cycle. Its recruitment to the Z-ring requires functional FtsA or ZipA.</text>
</comment>
<comment type="subunit">
    <text evidence="1">Homodimer. The ends of the coiled-coil dimer bind to each other, forming polymers. Interacts with FtsZ.</text>
</comment>
<comment type="subcellular location">
    <subcellularLocation>
        <location>Cytoplasm</location>
    </subcellularLocation>
    <text evidence="1">Localizes to the septum at mid-cell, in a FtsZ-like pattern.</text>
</comment>
<comment type="similarity">
    <text evidence="1">Belongs to the ZapB family.</text>
</comment>
<reference key="1">
    <citation type="journal article" date="2008" name="BMC Genomics">
        <title>Genomics of an extreme psychrophile, Psychromonas ingrahamii.</title>
        <authorList>
            <person name="Riley M."/>
            <person name="Staley J.T."/>
            <person name="Danchin A."/>
            <person name="Wang T.Z."/>
            <person name="Brettin T.S."/>
            <person name="Hauser L.J."/>
            <person name="Land M.L."/>
            <person name="Thompson L.S."/>
        </authorList>
    </citation>
    <scope>NUCLEOTIDE SEQUENCE [LARGE SCALE GENOMIC DNA]</scope>
    <source>
        <strain>DSM 17664 / CCUG 51855 / 37</strain>
    </source>
</reference>
<organism>
    <name type="scientific">Psychromonas ingrahamii (strain DSM 17664 / CCUG 51855 / 37)</name>
    <dbReference type="NCBI Taxonomy" id="357804"/>
    <lineage>
        <taxon>Bacteria</taxon>
        <taxon>Pseudomonadati</taxon>
        <taxon>Pseudomonadota</taxon>
        <taxon>Gammaproteobacteria</taxon>
        <taxon>Alteromonadales</taxon>
        <taxon>Psychromonadaceae</taxon>
        <taxon>Psychromonas</taxon>
    </lineage>
</organism>
<proteinExistence type="inferred from homology"/>
<dbReference type="EMBL" id="CP000510">
    <property type="protein sequence ID" value="ABM04984.1"/>
    <property type="molecule type" value="Genomic_DNA"/>
</dbReference>
<dbReference type="RefSeq" id="WP_011771536.1">
    <property type="nucleotide sequence ID" value="NC_008709.1"/>
</dbReference>
<dbReference type="SMR" id="A1SZR9"/>
<dbReference type="STRING" id="357804.Ping_3297"/>
<dbReference type="KEGG" id="pin:Ping_3297"/>
<dbReference type="eggNOG" id="COG3074">
    <property type="taxonomic scope" value="Bacteria"/>
</dbReference>
<dbReference type="HOGENOM" id="CLU_171174_1_1_6"/>
<dbReference type="OrthoDB" id="6554593at2"/>
<dbReference type="Proteomes" id="UP000000639">
    <property type="component" value="Chromosome"/>
</dbReference>
<dbReference type="GO" id="GO:0005737">
    <property type="term" value="C:cytoplasm"/>
    <property type="evidence" value="ECO:0007669"/>
    <property type="project" value="UniProtKB-SubCell"/>
</dbReference>
<dbReference type="GO" id="GO:0000917">
    <property type="term" value="P:division septum assembly"/>
    <property type="evidence" value="ECO:0007669"/>
    <property type="project" value="UniProtKB-KW"/>
</dbReference>
<dbReference type="GO" id="GO:0043093">
    <property type="term" value="P:FtsZ-dependent cytokinesis"/>
    <property type="evidence" value="ECO:0007669"/>
    <property type="project" value="UniProtKB-UniRule"/>
</dbReference>
<dbReference type="Gene3D" id="1.20.5.340">
    <property type="match status" value="1"/>
</dbReference>
<dbReference type="HAMAP" id="MF_01196">
    <property type="entry name" value="ZapB"/>
    <property type="match status" value="1"/>
</dbReference>
<dbReference type="InterPro" id="IPR009252">
    <property type="entry name" value="Cell_div_ZapB"/>
</dbReference>
<dbReference type="Pfam" id="PF06005">
    <property type="entry name" value="ZapB"/>
    <property type="match status" value="1"/>
</dbReference>
<feature type="chain" id="PRO_0000333913" description="Cell division protein ZapB">
    <location>
        <begin position="1"/>
        <end position="74"/>
    </location>
</feature>
<feature type="coiled-coil region" evidence="1">
    <location>
        <begin position="2"/>
        <end position="74"/>
    </location>
</feature>
<accession>A1SZR9</accession>
<protein>
    <recommendedName>
        <fullName evidence="1">Cell division protein ZapB</fullName>
    </recommendedName>
</protein>
<sequence>MTLDLLEQLESKIQNTVDTIALLQMEVEELKEDKQVLTEKGEQLQAENIRLTEEHQKWQSRLSALVGKIEETES</sequence>
<name>ZAPB_PSYIN</name>
<gene>
    <name evidence="1" type="primary">zapB</name>
    <name type="ordered locus">Ping_3297</name>
</gene>
<evidence type="ECO:0000255" key="1">
    <source>
        <dbReference type="HAMAP-Rule" id="MF_01196"/>
    </source>
</evidence>
<keyword id="KW-0131">Cell cycle</keyword>
<keyword id="KW-0132">Cell division</keyword>
<keyword id="KW-0175">Coiled coil</keyword>
<keyword id="KW-0963">Cytoplasm</keyword>
<keyword id="KW-1185">Reference proteome</keyword>
<keyword id="KW-0717">Septation</keyword>